<proteinExistence type="inferred from homology"/>
<evidence type="ECO:0000255" key="1">
    <source>
        <dbReference type="HAMAP-Rule" id="MF_00179"/>
    </source>
</evidence>
<accession>Q492N9</accession>
<organism>
    <name type="scientific">Blochmanniella pennsylvanica (strain BPEN)</name>
    <dbReference type="NCBI Taxonomy" id="291272"/>
    <lineage>
        <taxon>Bacteria</taxon>
        <taxon>Pseudomonadati</taxon>
        <taxon>Pseudomonadota</taxon>
        <taxon>Gammaproteobacteria</taxon>
        <taxon>Enterobacterales</taxon>
        <taxon>Enterobacteriaceae</taxon>
        <taxon>ant endosymbionts</taxon>
        <taxon>Candidatus Blochmanniella</taxon>
    </lineage>
</organism>
<reference key="1">
    <citation type="journal article" date="2005" name="Genome Res.">
        <title>Genome sequence of Blochmannia pennsylvanicus indicates parallel evolutionary trends among bacterial mutualists of insects.</title>
        <authorList>
            <person name="Degnan P.H."/>
            <person name="Lazarus A.B."/>
            <person name="Wernegreen J.J."/>
        </authorList>
    </citation>
    <scope>NUCLEOTIDE SEQUENCE [LARGE SCALE GENOMIC DNA]</scope>
    <source>
        <strain>BPEN</strain>
    </source>
</reference>
<dbReference type="EC" id="3.5.4.25" evidence="1"/>
<dbReference type="EMBL" id="CP000016">
    <property type="protein sequence ID" value="AAZ41056.1"/>
    <property type="molecule type" value="Genomic_DNA"/>
</dbReference>
<dbReference type="RefSeq" id="WP_011282966.1">
    <property type="nucleotide sequence ID" value="NC_007292.1"/>
</dbReference>
<dbReference type="SMR" id="Q492N9"/>
<dbReference type="STRING" id="291272.BPEN_437"/>
<dbReference type="KEGG" id="bpn:BPEN_437"/>
<dbReference type="eggNOG" id="COG0807">
    <property type="taxonomic scope" value="Bacteria"/>
</dbReference>
<dbReference type="HOGENOM" id="CLU_020273_2_1_6"/>
<dbReference type="OrthoDB" id="9793111at2"/>
<dbReference type="UniPathway" id="UPA00275">
    <property type="reaction ID" value="UER00400"/>
</dbReference>
<dbReference type="Proteomes" id="UP000007794">
    <property type="component" value="Chromosome"/>
</dbReference>
<dbReference type="GO" id="GO:0005829">
    <property type="term" value="C:cytosol"/>
    <property type="evidence" value="ECO:0007669"/>
    <property type="project" value="TreeGrafter"/>
</dbReference>
<dbReference type="GO" id="GO:0005525">
    <property type="term" value="F:GTP binding"/>
    <property type="evidence" value="ECO:0007669"/>
    <property type="project" value="UniProtKB-KW"/>
</dbReference>
<dbReference type="GO" id="GO:0003935">
    <property type="term" value="F:GTP cyclohydrolase II activity"/>
    <property type="evidence" value="ECO:0007669"/>
    <property type="project" value="UniProtKB-UniRule"/>
</dbReference>
<dbReference type="GO" id="GO:0008270">
    <property type="term" value="F:zinc ion binding"/>
    <property type="evidence" value="ECO:0007669"/>
    <property type="project" value="UniProtKB-UniRule"/>
</dbReference>
<dbReference type="GO" id="GO:0009231">
    <property type="term" value="P:riboflavin biosynthetic process"/>
    <property type="evidence" value="ECO:0007669"/>
    <property type="project" value="UniProtKB-UniRule"/>
</dbReference>
<dbReference type="CDD" id="cd00641">
    <property type="entry name" value="GTP_cyclohydro2"/>
    <property type="match status" value="1"/>
</dbReference>
<dbReference type="FunFam" id="3.40.50.10990:FF:000002">
    <property type="entry name" value="GTP cyclohydrolase-2"/>
    <property type="match status" value="1"/>
</dbReference>
<dbReference type="Gene3D" id="3.40.50.10990">
    <property type="entry name" value="GTP cyclohydrolase II"/>
    <property type="match status" value="1"/>
</dbReference>
<dbReference type="HAMAP" id="MF_00179">
    <property type="entry name" value="RibA"/>
    <property type="match status" value="1"/>
</dbReference>
<dbReference type="InterPro" id="IPR032677">
    <property type="entry name" value="GTP_cyclohydro_II"/>
</dbReference>
<dbReference type="InterPro" id="IPR000926">
    <property type="entry name" value="RibA"/>
</dbReference>
<dbReference type="InterPro" id="IPR036144">
    <property type="entry name" value="RibA-like_sf"/>
</dbReference>
<dbReference type="NCBIfam" id="NF001591">
    <property type="entry name" value="PRK00393.1"/>
    <property type="match status" value="1"/>
</dbReference>
<dbReference type="NCBIfam" id="TIGR00505">
    <property type="entry name" value="ribA"/>
    <property type="match status" value="1"/>
</dbReference>
<dbReference type="PANTHER" id="PTHR21327:SF18">
    <property type="entry name" value="3,4-DIHYDROXY-2-BUTANONE 4-PHOSPHATE SYNTHASE"/>
    <property type="match status" value="1"/>
</dbReference>
<dbReference type="PANTHER" id="PTHR21327">
    <property type="entry name" value="GTP CYCLOHYDROLASE II-RELATED"/>
    <property type="match status" value="1"/>
</dbReference>
<dbReference type="Pfam" id="PF00925">
    <property type="entry name" value="GTP_cyclohydro2"/>
    <property type="match status" value="1"/>
</dbReference>
<dbReference type="SUPFAM" id="SSF142695">
    <property type="entry name" value="RibA-like"/>
    <property type="match status" value="1"/>
</dbReference>
<comment type="function">
    <text evidence="1">Catalyzes the conversion of GTP to 2,5-diamino-6-ribosylamino-4(3H)-pyrimidinone 5'-phosphate (DARP), formate and pyrophosphate.</text>
</comment>
<comment type="catalytic activity">
    <reaction evidence="1">
        <text>GTP + 4 H2O = 2,5-diamino-6-hydroxy-4-(5-phosphoribosylamino)-pyrimidine + formate + 2 phosphate + 3 H(+)</text>
        <dbReference type="Rhea" id="RHEA:23704"/>
        <dbReference type="ChEBI" id="CHEBI:15377"/>
        <dbReference type="ChEBI" id="CHEBI:15378"/>
        <dbReference type="ChEBI" id="CHEBI:15740"/>
        <dbReference type="ChEBI" id="CHEBI:37565"/>
        <dbReference type="ChEBI" id="CHEBI:43474"/>
        <dbReference type="ChEBI" id="CHEBI:58614"/>
        <dbReference type="EC" id="3.5.4.25"/>
    </reaction>
</comment>
<comment type="cofactor">
    <cofactor evidence="1">
        <name>Zn(2+)</name>
        <dbReference type="ChEBI" id="CHEBI:29105"/>
    </cofactor>
    <text evidence="1">Binds 1 zinc ion per subunit.</text>
</comment>
<comment type="pathway">
    <text evidence="1">Cofactor biosynthesis; riboflavin biosynthesis; 5-amino-6-(D-ribitylamino)uracil from GTP: step 1/4.</text>
</comment>
<comment type="subunit">
    <text evidence="1">Homodimer.</text>
</comment>
<comment type="similarity">
    <text evidence="1">Belongs to the GTP cyclohydrolase II family.</text>
</comment>
<sequence>MRLRRVTEARLPTLWGNFLIVGFEENFTGHNHIALIYGNITGSDPVLTRIHSECLTGDALFSSRCDCGFQLKTALHCITEEKRGILIYHRQEGRNIGLLNKIRAYALQDNGADTVEANQCLGFAPDERDFTICADILKLLRVKKIRILTNNPKKVEILNKSCINITERVPLIVGRNPENSRYLDTKASKLGHLFYSYHK</sequence>
<feature type="chain" id="PRO_0000151749" description="GTP cyclohydrolase-2">
    <location>
        <begin position="1"/>
        <end position="199"/>
    </location>
</feature>
<feature type="active site" description="Proton acceptor" evidence="1">
    <location>
        <position position="126"/>
    </location>
</feature>
<feature type="active site" description="Nucleophile" evidence="1">
    <location>
        <position position="128"/>
    </location>
</feature>
<feature type="binding site" evidence="1">
    <location>
        <begin position="49"/>
        <end position="53"/>
    </location>
    <ligand>
        <name>GTP</name>
        <dbReference type="ChEBI" id="CHEBI:37565"/>
    </ligand>
</feature>
<feature type="binding site" evidence="1">
    <location>
        <position position="54"/>
    </location>
    <ligand>
        <name>Zn(2+)</name>
        <dbReference type="ChEBI" id="CHEBI:29105"/>
        <note>catalytic</note>
    </ligand>
</feature>
<feature type="binding site" evidence="1">
    <location>
        <position position="65"/>
    </location>
    <ligand>
        <name>Zn(2+)</name>
        <dbReference type="ChEBI" id="CHEBI:29105"/>
        <note>catalytic</note>
    </ligand>
</feature>
<feature type="binding site" evidence="1">
    <location>
        <position position="67"/>
    </location>
    <ligand>
        <name>Zn(2+)</name>
        <dbReference type="ChEBI" id="CHEBI:29105"/>
        <note>catalytic</note>
    </ligand>
</feature>
<feature type="binding site" evidence="1">
    <location>
        <position position="70"/>
    </location>
    <ligand>
        <name>GTP</name>
        <dbReference type="ChEBI" id="CHEBI:37565"/>
    </ligand>
</feature>
<feature type="binding site" evidence="1">
    <location>
        <begin position="92"/>
        <end position="94"/>
    </location>
    <ligand>
        <name>GTP</name>
        <dbReference type="ChEBI" id="CHEBI:37565"/>
    </ligand>
</feature>
<feature type="binding site" evidence="1">
    <location>
        <position position="114"/>
    </location>
    <ligand>
        <name>GTP</name>
        <dbReference type="ChEBI" id="CHEBI:37565"/>
    </ligand>
</feature>
<feature type="binding site" evidence="1">
    <location>
        <position position="149"/>
    </location>
    <ligand>
        <name>GTP</name>
        <dbReference type="ChEBI" id="CHEBI:37565"/>
    </ligand>
</feature>
<feature type="binding site" evidence="1">
    <location>
        <position position="154"/>
    </location>
    <ligand>
        <name>GTP</name>
        <dbReference type="ChEBI" id="CHEBI:37565"/>
    </ligand>
</feature>
<gene>
    <name evidence="1" type="primary">ribA</name>
    <name type="ordered locus">BPEN_437</name>
</gene>
<protein>
    <recommendedName>
        <fullName evidence="1">GTP cyclohydrolase-2</fullName>
        <ecNumber evidence="1">3.5.4.25</ecNumber>
    </recommendedName>
    <alternativeName>
        <fullName evidence="1">GTP cyclohydrolase II</fullName>
    </alternativeName>
</protein>
<keyword id="KW-0342">GTP-binding</keyword>
<keyword id="KW-0378">Hydrolase</keyword>
<keyword id="KW-0479">Metal-binding</keyword>
<keyword id="KW-0547">Nucleotide-binding</keyword>
<keyword id="KW-1185">Reference proteome</keyword>
<keyword id="KW-0686">Riboflavin biosynthesis</keyword>
<keyword id="KW-0862">Zinc</keyword>
<name>RIBA_BLOPB</name>